<evidence type="ECO:0000255" key="1">
    <source>
        <dbReference type="HAMAP-Rule" id="MF_00163"/>
    </source>
</evidence>
<keyword id="KW-0378">Hydrolase</keyword>
<keyword id="KW-0408">Iron</keyword>
<keyword id="KW-0479">Metal-binding</keyword>
<keyword id="KW-0648">Protein biosynthesis</keyword>
<keyword id="KW-1185">Reference proteome</keyword>
<reference key="1">
    <citation type="journal article" date="2006" name="Science">
        <title>A small microbial genome: the end of a long symbiotic relationship?</title>
        <authorList>
            <person name="Perez-Brocal V."/>
            <person name="Gil R."/>
            <person name="Ramos S."/>
            <person name="Lamelas A."/>
            <person name="Postigo M."/>
            <person name="Michelena J.M."/>
            <person name="Silva F.J."/>
            <person name="Moya A."/>
            <person name="Latorre A."/>
        </authorList>
    </citation>
    <scope>NUCLEOTIDE SEQUENCE [LARGE SCALE GENOMIC DNA]</scope>
    <source>
        <strain>Cc</strain>
    </source>
</reference>
<gene>
    <name evidence="1" type="primary">def</name>
    <name type="ordered locus">BCc_313</name>
</gene>
<protein>
    <recommendedName>
        <fullName evidence="1">Peptide deformylase</fullName>
        <shortName evidence="1">PDF</shortName>
        <ecNumber evidence="1">3.5.1.88</ecNumber>
    </recommendedName>
    <alternativeName>
        <fullName evidence="1">Polypeptide deformylase</fullName>
    </alternativeName>
</protein>
<organism>
    <name type="scientific">Buchnera aphidicola subsp. Cinara cedri (strain Cc)</name>
    <dbReference type="NCBI Taxonomy" id="372461"/>
    <lineage>
        <taxon>Bacteria</taxon>
        <taxon>Pseudomonadati</taxon>
        <taxon>Pseudomonadota</taxon>
        <taxon>Gammaproteobacteria</taxon>
        <taxon>Enterobacterales</taxon>
        <taxon>Erwiniaceae</taxon>
        <taxon>Buchnera</taxon>
    </lineage>
</organism>
<proteinExistence type="inferred from homology"/>
<name>DEF_BUCCC</name>
<feature type="chain" id="PRO_0000301014" description="Peptide deformylase">
    <location>
        <begin position="1"/>
        <end position="149"/>
    </location>
</feature>
<feature type="active site" evidence="1">
    <location>
        <position position="135"/>
    </location>
</feature>
<feature type="binding site" evidence="1">
    <location>
        <position position="92"/>
    </location>
    <ligand>
        <name>Fe cation</name>
        <dbReference type="ChEBI" id="CHEBI:24875"/>
    </ligand>
</feature>
<feature type="binding site" evidence="1">
    <location>
        <position position="134"/>
    </location>
    <ligand>
        <name>Fe cation</name>
        <dbReference type="ChEBI" id="CHEBI:24875"/>
    </ligand>
</feature>
<feature type="binding site" evidence="1">
    <location>
        <position position="138"/>
    </location>
    <ligand>
        <name>Fe cation</name>
        <dbReference type="ChEBI" id="CHEBI:24875"/>
    </ligand>
</feature>
<accession>Q057D2</accession>
<comment type="function">
    <text evidence="1">Removes the formyl group from the N-terminal Met of newly synthesized proteins. Requires at least a dipeptide for an efficient rate of reaction. N-terminal L-methionine is a prerequisite for activity but the enzyme has broad specificity at other positions.</text>
</comment>
<comment type="catalytic activity">
    <reaction evidence="1">
        <text>N-terminal N-formyl-L-methionyl-[peptide] + H2O = N-terminal L-methionyl-[peptide] + formate</text>
        <dbReference type="Rhea" id="RHEA:24420"/>
        <dbReference type="Rhea" id="RHEA-COMP:10639"/>
        <dbReference type="Rhea" id="RHEA-COMP:10640"/>
        <dbReference type="ChEBI" id="CHEBI:15377"/>
        <dbReference type="ChEBI" id="CHEBI:15740"/>
        <dbReference type="ChEBI" id="CHEBI:49298"/>
        <dbReference type="ChEBI" id="CHEBI:64731"/>
        <dbReference type="EC" id="3.5.1.88"/>
    </reaction>
</comment>
<comment type="cofactor">
    <cofactor evidence="1">
        <name>Fe(2+)</name>
        <dbReference type="ChEBI" id="CHEBI:29033"/>
    </cofactor>
    <text evidence="1">Binds 1 Fe(2+) ion.</text>
</comment>
<comment type="similarity">
    <text evidence="1">Belongs to the polypeptide deformylase family.</text>
</comment>
<sequence length="149" mass="16979">MSIRKILQFPDYRLRLLSKPIKIINKKTKKIIYDMFDTMYANNGIGLAAPQINILKQIIVISSLKPTMSELVLINPVILKKNKKYINTIEGCLSIPKKTAKIKRSSCIKIQAINTYGKSFTLTAKSLLSICIQHEIDHLIGKLFIDYIN</sequence>
<dbReference type="EC" id="3.5.1.88" evidence="1"/>
<dbReference type="EMBL" id="CP000263">
    <property type="protein sequence ID" value="ABJ90767.1"/>
    <property type="molecule type" value="Genomic_DNA"/>
</dbReference>
<dbReference type="RefSeq" id="WP_011672686.1">
    <property type="nucleotide sequence ID" value="NC_008513.1"/>
</dbReference>
<dbReference type="SMR" id="Q057D2"/>
<dbReference type="STRING" id="372461.BCc_313"/>
<dbReference type="KEGG" id="bcc:BCc_313"/>
<dbReference type="eggNOG" id="COG0242">
    <property type="taxonomic scope" value="Bacteria"/>
</dbReference>
<dbReference type="HOGENOM" id="CLU_061901_2_1_6"/>
<dbReference type="OrthoDB" id="9804313at2"/>
<dbReference type="Proteomes" id="UP000000669">
    <property type="component" value="Chromosome"/>
</dbReference>
<dbReference type="GO" id="GO:0046872">
    <property type="term" value="F:metal ion binding"/>
    <property type="evidence" value="ECO:0007669"/>
    <property type="project" value="UniProtKB-KW"/>
</dbReference>
<dbReference type="GO" id="GO:0042586">
    <property type="term" value="F:peptide deformylase activity"/>
    <property type="evidence" value="ECO:0007669"/>
    <property type="project" value="UniProtKB-UniRule"/>
</dbReference>
<dbReference type="GO" id="GO:0043686">
    <property type="term" value="P:co-translational protein modification"/>
    <property type="evidence" value="ECO:0007669"/>
    <property type="project" value="TreeGrafter"/>
</dbReference>
<dbReference type="GO" id="GO:0006412">
    <property type="term" value="P:translation"/>
    <property type="evidence" value="ECO:0007669"/>
    <property type="project" value="UniProtKB-UniRule"/>
</dbReference>
<dbReference type="CDD" id="cd00487">
    <property type="entry name" value="Pep_deformylase"/>
    <property type="match status" value="1"/>
</dbReference>
<dbReference type="Gene3D" id="3.90.45.10">
    <property type="entry name" value="Peptide deformylase"/>
    <property type="match status" value="1"/>
</dbReference>
<dbReference type="HAMAP" id="MF_00163">
    <property type="entry name" value="Pep_deformylase"/>
    <property type="match status" value="1"/>
</dbReference>
<dbReference type="InterPro" id="IPR023635">
    <property type="entry name" value="Peptide_deformylase"/>
</dbReference>
<dbReference type="InterPro" id="IPR036821">
    <property type="entry name" value="Peptide_deformylase_sf"/>
</dbReference>
<dbReference type="NCBIfam" id="TIGR00079">
    <property type="entry name" value="pept_deformyl"/>
    <property type="match status" value="1"/>
</dbReference>
<dbReference type="NCBIfam" id="NF001159">
    <property type="entry name" value="PRK00150.1-3"/>
    <property type="match status" value="1"/>
</dbReference>
<dbReference type="PANTHER" id="PTHR10458">
    <property type="entry name" value="PEPTIDE DEFORMYLASE"/>
    <property type="match status" value="1"/>
</dbReference>
<dbReference type="PANTHER" id="PTHR10458:SF22">
    <property type="entry name" value="PEPTIDE DEFORMYLASE"/>
    <property type="match status" value="1"/>
</dbReference>
<dbReference type="Pfam" id="PF01327">
    <property type="entry name" value="Pep_deformylase"/>
    <property type="match status" value="1"/>
</dbReference>
<dbReference type="PIRSF" id="PIRSF004749">
    <property type="entry name" value="Pep_def"/>
    <property type="match status" value="1"/>
</dbReference>
<dbReference type="PRINTS" id="PR01576">
    <property type="entry name" value="PDEFORMYLASE"/>
</dbReference>
<dbReference type="SUPFAM" id="SSF56420">
    <property type="entry name" value="Peptide deformylase"/>
    <property type="match status" value="1"/>
</dbReference>